<protein>
    <recommendedName>
        <fullName evidence="12">Alpha-2,8-sialyltransferase 8B</fullName>
        <ecNumber evidence="4 5 6 8 9">2.4.3.-</ecNumber>
    </recommendedName>
    <alternativeName>
        <fullName>Sialyltransferase 8B</fullName>
        <shortName>SIAT8-B</shortName>
    </alternativeName>
    <alternativeName>
        <fullName>Sialyltransferase St8Sia II</fullName>
        <shortName>ST8SiaII</shortName>
    </alternativeName>
    <alternativeName>
        <fullName evidence="15">Sialyltransferase X</fullName>
        <shortName evidence="11">STX</shortName>
    </alternativeName>
</protein>
<keyword id="KW-1003">Cell membrane</keyword>
<keyword id="KW-1015">Disulfide bond</keyword>
<keyword id="KW-0325">Glycoprotein</keyword>
<keyword id="KW-0328">Glycosyltransferase</keyword>
<keyword id="KW-0333">Golgi apparatus</keyword>
<keyword id="KW-0472">Membrane</keyword>
<keyword id="KW-0547">Nucleotide-binding</keyword>
<keyword id="KW-1267">Proteomics identification</keyword>
<keyword id="KW-1185">Reference proteome</keyword>
<keyword id="KW-0964">Secreted</keyword>
<keyword id="KW-0735">Signal-anchor</keyword>
<keyword id="KW-0808">Transferase</keyword>
<keyword id="KW-0812">Transmembrane</keyword>
<keyword id="KW-1133">Transmembrane helix</keyword>
<comment type="function">
    <text evidence="1 4 5 7 8 9 14">Catalyzes the transfer of a sialic acid from a CMP-linked sialic acid donor onto a terminal alpha-2,3-, alpha-2,6-, or alpha-2,8-linked sialic acid of an N-linked glycan acceptor through alpha-2,8-linkages (Probable) (PubMed:10766765, PubMed:11744634, PubMed:9054414, PubMed:9774483). Therefore, participates in polysialic acid synthesis on various sialylated N-acetyllactosaminyl oligosaccharides (alpha-2,3-, alpha-2,6-, or alpha-2,8-linked sialic acid), including NCAM1, NCAM1 N-glycans, FETUB N-glycans, and to a lesser extent sialylparagloboside (SPG) and AHSG, which does not require the initial addition of an alpha 2,8-sialic acid (Probable) (PubMed:7559389). However, does not exhibit sialic acid-polymerase activity (By similarity). Catalyzes polysialic acid synthesis in the hippocampal on NCAM1 and supports neurite outgrowth (PubMed:9054414). ST8SIA2-mediated polysialylation influences on oligodendrocyte differentiation and may promote the integrity of myelin and axons (By similarity).</text>
</comment>
<comment type="catalytic activity">
    <reaction evidence="4 5 6 8 9">
        <text>[N-acetyl-alpha-D-neuraminosyl-(2-&gt;8)](n) + CMP-N-acetyl-beta-neuraminate = [N-acetyl-alpha-D-neuraminosyl-(2-&gt;8)](n+1) + CMP + H(+)</text>
        <dbReference type="Rhea" id="RHEA:77367"/>
        <dbReference type="Rhea" id="RHEA-COMP:14315"/>
        <dbReference type="Rhea" id="RHEA-COMP:18878"/>
        <dbReference type="ChEBI" id="CHEBI:15378"/>
        <dbReference type="ChEBI" id="CHEBI:57812"/>
        <dbReference type="ChEBI" id="CHEBI:60377"/>
        <dbReference type="ChEBI" id="CHEBI:139252"/>
    </reaction>
    <physiologicalReaction direction="left-to-right" evidence="4 5 6 8 9">
        <dbReference type="Rhea" id="RHEA:77368"/>
    </physiologicalReaction>
</comment>
<comment type="pathway">
    <text evidence="4 5 6 8 9">Protein modification; protein glycosylation.</text>
</comment>
<comment type="subcellular location">
    <subcellularLocation>
        <location evidence="5 10">Golgi apparatus membrane</location>
        <topology evidence="12">Single-pass type II membrane protein</topology>
    </subcellularLocation>
    <subcellularLocation>
        <location evidence="5 10">Secreted</location>
    </subcellularLocation>
    <subcellularLocation>
        <location evidence="5 10">Cell membrane</location>
    </subcellularLocation>
    <text evidence="5 10">Also trafficks to the cell surface.</text>
</comment>
<comment type="tissue specificity">
    <text evidence="8">Highly expressed in fetal brain, kidney and heart and to a much lesser extent in adult heart and thymus.</text>
</comment>
<comment type="PTM">
    <text evidence="4 5 10">Autopolysialylated (PubMed:10766765, PubMed:11744634, PubMed:9852130). Autopolysialylation is not a prerequisite for the polysialylation acitity, but enhances the polysialylation acitity (PubMed:11744634).</text>
</comment>
<comment type="similarity">
    <text evidence="12">Belongs to the glycosyltransferase 29 family.</text>
</comment>
<comment type="online information" name="Functional Glycomics Gateway - GTase">
    <link uri="http://www.functionalglycomics.org/glycomics/molecule/jsp/glycoEnzyme/viewGlycoEnzyme.jsp?gbpId=gt_hum_637"/>
    <text>ST8Sia II</text>
</comment>
<reference key="1">
    <citation type="journal article" date="1995" name="J. Biol. Chem.">
        <title>A human STX cDNA confers polysialic acid expression in mammalian cells.</title>
        <authorList>
            <person name="Scheidegger E.P."/>
            <person name="Sternberg L.R."/>
            <person name="Roth J."/>
            <person name="Lowe J.B."/>
        </authorList>
    </citation>
    <scope>NUCLEOTIDE SEQUENCE [MRNA]</scope>
    <scope>FUNCTION</scope>
</reference>
<reference key="2">
    <citation type="journal article" date="1997" name="J. Biol. Chem.">
        <title>Human STX polysialyltransferase forms the embryonic form of the neural cell adhesion molecule. Tissue-specific expression, neurite outgrowth, and chromosomal localization in comparison with another polysialyltransferase, PST.</title>
        <authorList>
            <person name="Angata K."/>
            <person name="Nakayama J."/>
            <person name="Fredette B."/>
            <person name="Chong K."/>
            <person name="Ranscht B."/>
            <person name="Fukuda M."/>
        </authorList>
    </citation>
    <scope>NUCLEOTIDE SEQUENCE [MRNA]</scope>
    <scope>FUNCTION</scope>
    <scope>CATALYTIC ACTIVITY</scope>
    <scope>TISSUE SPECIFICITY</scope>
    <source>
        <tissue>Brain</tissue>
    </source>
</reference>
<reference key="3">
    <citation type="journal article" date="2006" name="Nature">
        <title>Analysis of the DNA sequence and duplication history of human chromosome 15.</title>
        <authorList>
            <person name="Zody M.C."/>
            <person name="Garber M."/>
            <person name="Sharpe T."/>
            <person name="Young S.K."/>
            <person name="Rowen L."/>
            <person name="O'Neill K."/>
            <person name="Whittaker C.A."/>
            <person name="Kamal M."/>
            <person name="Chang J.L."/>
            <person name="Cuomo C.A."/>
            <person name="Dewar K."/>
            <person name="FitzGerald M.G."/>
            <person name="Kodira C.D."/>
            <person name="Madan A."/>
            <person name="Qin S."/>
            <person name="Yang X."/>
            <person name="Abbasi N."/>
            <person name="Abouelleil A."/>
            <person name="Arachchi H.M."/>
            <person name="Baradarani L."/>
            <person name="Birditt B."/>
            <person name="Bloom S."/>
            <person name="Bloom T."/>
            <person name="Borowsky M.L."/>
            <person name="Burke J."/>
            <person name="Butler J."/>
            <person name="Cook A."/>
            <person name="DeArellano K."/>
            <person name="DeCaprio D."/>
            <person name="Dorris L. III"/>
            <person name="Dors M."/>
            <person name="Eichler E.E."/>
            <person name="Engels R."/>
            <person name="Fahey J."/>
            <person name="Fleetwood P."/>
            <person name="Friedman C."/>
            <person name="Gearin G."/>
            <person name="Hall J.L."/>
            <person name="Hensley G."/>
            <person name="Johnson E."/>
            <person name="Jones C."/>
            <person name="Kamat A."/>
            <person name="Kaur A."/>
            <person name="Locke D.P."/>
            <person name="Madan A."/>
            <person name="Munson G."/>
            <person name="Jaffe D.B."/>
            <person name="Lui A."/>
            <person name="Macdonald P."/>
            <person name="Mauceli E."/>
            <person name="Naylor J.W."/>
            <person name="Nesbitt R."/>
            <person name="Nicol R."/>
            <person name="O'Leary S.B."/>
            <person name="Ratcliffe A."/>
            <person name="Rounsley S."/>
            <person name="She X."/>
            <person name="Sneddon K.M.B."/>
            <person name="Stewart S."/>
            <person name="Sougnez C."/>
            <person name="Stone S.M."/>
            <person name="Topham K."/>
            <person name="Vincent D."/>
            <person name="Wang S."/>
            <person name="Zimmer A.R."/>
            <person name="Birren B.W."/>
            <person name="Hood L."/>
            <person name="Lander E.S."/>
            <person name="Nusbaum C."/>
        </authorList>
    </citation>
    <scope>NUCLEOTIDE SEQUENCE [LARGE SCALE GENOMIC DNA]</scope>
</reference>
<reference key="4">
    <citation type="journal article" date="2004" name="Genome Res.">
        <title>The status, quality, and expansion of the NIH full-length cDNA project: the Mammalian Gene Collection (MGC).</title>
        <authorList>
            <consortium name="The MGC Project Team"/>
        </authorList>
    </citation>
    <scope>NUCLEOTIDE SEQUENCE [LARGE SCALE MRNA]</scope>
</reference>
<reference key="5">
    <citation type="journal article" date="1994" name="J. Biol. Chem.">
        <title>Differential expression of five sialyltransferase genes in human tissues.</title>
        <authorList>
            <person name="Kitagawa H."/>
            <person name="Paulson J.C."/>
        </authorList>
    </citation>
    <scope>NUCLEOTIDE SEQUENCE [MRNA] OF 154-375</scope>
    <source>
        <tissue>Fetal brain</tissue>
    </source>
</reference>
<reference key="6">
    <citation type="journal article" date="1998" name="J. Biol. Chem.">
        <title>Differential and cooperative polysialylation of the neural cell adhesion molecule by two polysialyltransferases, PST and STX.</title>
        <authorList>
            <person name="Angata K."/>
            <person name="Suzuki M."/>
            <person name="Fukuda M."/>
        </authorList>
    </citation>
    <scope>FUNCTION</scope>
    <scope>CATALYTIC ACTIVITY</scope>
</reference>
<reference key="7">
    <citation type="journal article" date="1998" name="J. Biol. Chem.">
        <title>In vivo autopolysialylation and localization of the polysialyltransferases PST and STX.</title>
        <authorList>
            <person name="Close B.E."/>
            <person name="Colley K.J."/>
        </authorList>
    </citation>
    <scope>SUBCELLULAR LOCATION</scope>
    <scope>AUTOPOLYSIALYLATION</scope>
</reference>
<reference key="8">
    <citation type="journal article" date="2000" name="J. Biol. Chem.">
        <title>Differential biosynthesis of polysialic acid on neural cell adhesion molecule (NCAM) and oligosaccharide acceptors by three distinct alpha2,8-Sialyltransferases, ST8Sia IV (PST), ST8Sia II (STX), and ST8Sia III.</title>
        <authorList>
            <person name="Angata K."/>
            <person name="Suzuki M."/>
            <person name="McAuliffe J."/>
            <person name="Ding Y."/>
            <person name="Hindsgaul O."/>
            <person name="Fukuda M."/>
        </authorList>
    </citation>
    <scope>FUNCTION</scope>
    <scope>CATALYTIC ACTIVITY</scope>
    <scope>AUTOPOLYSIALYLATION</scope>
    <source>
        <tissue>Fetal brain</tissue>
    </source>
</reference>
<reference key="9">
    <citation type="journal article" date="2001" name="Glycobiology">
        <title>The polysialyltransferase ST8Sia II/STX: posttranslational processing and role of autopolysialylation in the polysialylation of neural cell adhesion molecule.</title>
        <authorList>
            <person name="Close B.E."/>
            <person name="Wilkinson J.M."/>
            <person name="Bohrer T.J."/>
            <person name="Goodwin C.P."/>
            <person name="Broom L.J."/>
            <person name="Colley K.J."/>
        </authorList>
    </citation>
    <scope>FUNCTION</scope>
    <scope>CATALYTIC ACTIVITY</scope>
    <scope>SUBCELLULAR LOCATION</scope>
    <scope>AUTOPOLYSIALYLATION</scope>
    <scope>MUTAGENESIS OF ASN-60; ASN-72; ASN-89; ASN-134; ASN-219 AND ASN-234</scope>
    <scope>GLYCOSYLATION AT ASN-60; ASN-72; ASN-89; ASN-134; ASN-219 AND ASN-234</scope>
</reference>
<reference key="10">
    <citation type="journal article" date="2017" name="Glycobiology">
        <title>Different properties of polysialic acids synthesized by the polysialyltransferases ST8SIA2 and ST8SIA4.</title>
        <authorList>
            <person name="Mori A."/>
            <person name="Hane M."/>
            <person name="Niimi Y."/>
            <person name="Kitajima K."/>
            <person name="Sato C."/>
        </authorList>
    </citation>
    <scope>FUNCTION</scope>
    <scope>CATALYTIC ACTIVITY</scope>
</reference>
<proteinExistence type="evidence at protein level"/>
<sequence>MQLQFRSWMLAALTLLVVFLIFADISEIEEEIGNSGGRGTIRSAVNSLHSKSNRAEVVINGSSSPAVVDRSNESIKHNIQPASSKWRHNQTLSLRIRKQILKFLDAEKDISVLKGTLKPGDIIHYIFDRDSTMNVSQNLYELLPRTSPLKNKHFGTCAIVGNSGVLLNSGCGQEIDAHSFVIRCNLAPVQEYARDVGLKTDLVTMNPSVIQRAFEDLVNATWREKLLQRLHSLNGSILWIPAFMARGGKERVEWVNELILKHHVNVRTAYPSLRLLHAVRGYWLTNKVHIKRPTTGLLMYTLATRFCKQIYLYGFWPFPLDQNQNPVKYHYYDSLKYGYTSQASPHTMPLEFKALKSLHEQGALKLTVGQCDGAT</sequence>
<gene>
    <name evidence="16" type="primary">ST8SIA2</name>
    <name type="synonym">SIAT8B</name>
    <name evidence="11" type="synonym">STX</name>
</gene>
<accession>Q92186</accession>
<accession>Q4VAZ0</accession>
<accession>Q92470</accession>
<accession>Q92746</accession>
<evidence type="ECO:0000250" key="1">
    <source>
        <dbReference type="UniProtKB" id="O35696"/>
    </source>
</evidence>
<evidence type="ECO:0000250" key="2">
    <source>
        <dbReference type="UniProtKB" id="O43173"/>
    </source>
</evidence>
<evidence type="ECO:0000255" key="3"/>
<evidence type="ECO:0000269" key="4">
    <source>
    </source>
</evidence>
<evidence type="ECO:0000269" key="5">
    <source>
    </source>
</evidence>
<evidence type="ECO:0000269" key="6">
    <source>
    </source>
</evidence>
<evidence type="ECO:0000269" key="7">
    <source>
    </source>
</evidence>
<evidence type="ECO:0000269" key="8">
    <source>
    </source>
</evidence>
<evidence type="ECO:0000269" key="9">
    <source>
    </source>
</evidence>
<evidence type="ECO:0000269" key="10">
    <source>
    </source>
</evidence>
<evidence type="ECO:0000303" key="11">
    <source>
    </source>
</evidence>
<evidence type="ECO:0000305" key="12"/>
<evidence type="ECO:0000305" key="13">
    <source>
    </source>
</evidence>
<evidence type="ECO:0000305" key="14">
    <source>
    </source>
</evidence>
<evidence type="ECO:0000305" key="15">
    <source>
    </source>
</evidence>
<evidence type="ECO:0000312" key="16">
    <source>
        <dbReference type="HGNC" id="HGNC:10870"/>
    </source>
</evidence>
<dbReference type="EC" id="2.4.3.-" evidence="4 5 6 8 9"/>
<dbReference type="EMBL" id="U33551">
    <property type="protein sequence ID" value="AAC24458.1"/>
    <property type="molecule type" value="mRNA"/>
</dbReference>
<dbReference type="EMBL" id="U82762">
    <property type="protein sequence ID" value="AAB51242.1"/>
    <property type="molecule type" value="mRNA"/>
</dbReference>
<dbReference type="EMBL" id="AC090985">
    <property type="status" value="NOT_ANNOTATED_CDS"/>
    <property type="molecule type" value="Genomic_DNA"/>
</dbReference>
<dbReference type="EMBL" id="AC116162">
    <property type="status" value="NOT_ANNOTATED_CDS"/>
    <property type="molecule type" value="Genomic_DNA"/>
</dbReference>
<dbReference type="EMBL" id="BC069584">
    <property type="protein sequence ID" value="AAH69584.1"/>
    <property type="molecule type" value="mRNA"/>
</dbReference>
<dbReference type="EMBL" id="BC096203">
    <property type="protein sequence ID" value="AAH96203.1"/>
    <property type="molecule type" value="mRNA"/>
</dbReference>
<dbReference type="EMBL" id="BC096204">
    <property type="protein sequence ID" value="AAH96204.1"/>
    <property type="molecule type" value="mRNA"/>
</dbReference>
<dbReference type="EMBL" id="L29556">
    <property type="protein sequence ID" value="AAA36613.1"/>
    <property type="molecule type" value="mRNA"/>
</dbReference>
<dbReference type="CCDS" id="CCDS10372.1"/>
<dbReference type="PIR" id="B54898">
    <property type="entry name" value="B54898"/>
</dbReference>
<dbReference type="PIR" id="I39169">
    <property type="entry name" value="I39169"/>
</dbReference>
<dbReference type="RefSeq" id="NP_006002.1">
    <property type="nucleotide sequence ID" value="NM_006011.4"/>
</dbReference>
<dbReference type="SMR" id="Q92186"/>
<dbReference type="BioGRID" id="113793">
    <property type="interactions" value="14"/>
</dbReference>
<dbReference type="FunCoup" id="Q92186">
    <property type="interactions" value="212"/>
</dbReference>
<dbReference type="IntAct" id="Q92186">
    <property type="interactions" value="9"/>
</dbReference>
<dbReference type="STRING" id="9606.ENSP00000268164"/>
<dbReference type="CAZy" id="GT29">
    <property type="family name" value="Glycosyltransferase Family 29"/>
</dbReference>
<dbReference type="GlyCosmos" id="Q92186">
    <property type="glycosylation" value="6 sites, No reported glycans"/>
</dbReference>
<dbReference type="GlyGen" id="Q92186">
    <property type="glycosylation" value="7 sites, 1 N-linked glycan (1 site)"/>
</dbReference>
<dbReference type="iPTMnet" id="Q92186"/>
<dbReference type="PhosphoSitePlus" id="Q92186"/>
<dbReference type="BioMuta" id="ST8SIA2"/>
<dbReference type="DMDM" id="2494831"/>
<dbReference type="MassIVE" id="Q92186"/>
<dbReference type="PaxDb" id="9606-ENSP00000268164"/>
<dbReference type="PeptideAtlas" id="Q92186"/>
<dbReference type="ABCD" id="Q92186">
    <property type="antibodies" value="1 sequenced antibody"/>
</dbReference>
<dbReference type="Antibodypedia" id="29022">
    <property type="antibodies" value="130 antibodies from 30 providers"/>
</dbReference>
<dbReference type="DNASU" id="8128"/>
<dbReference type="Ensembl" id="ENST00000268164.8">
    <property type="protein sequence ID" value="ENSP00000268164.3"/>
    <property type="gene ID" value="ENSG00000140557.12"/>
</dbReference>
<dbReference type="GeneID" id="8128"/>
<dbReference type="KEGG" id="hsa:8128"/>
<dbReference type="MANE-Select" id="ENST00000268164.8">
    <property type="protein sequence ID" value="ENSP00000268164.3"/>
    <property type="RefSeq nucleotide sequence ID" value="NM_006011.4"/>
    <property type="RefSeq protein sequence ID" value="NP_006002.1"/>
</dbReference>
<dbReference type="UCSC" id="uc002bra.4">
    <property type="organism name" value="human"/>
</dbReference>
<dbReference type="AGR" id="HGNC:10870"/>
<dbReference type="CTD" id="8128"/>
<dbReference type="DisGeNET" id="8128"/>
<dbReference type="GeneCards" id="ST8SIA2"/>
<dbReference type="HGNC" id="HGNC:10870">
    <property type="gene designation" value="ST8SIA2"/>
</dbReference>
<dbReference type="HPA" id="ENSG00000140557">
    <property type="expression patterns" value="Tissue enhanced (heart muscle, lymphoid tissue)"/>
</dbReference>
<dbReference type="MalaCards" id="ST8SIA2"/>
<dbReference type="MIM" id="602546">
    <property type="type" value="gene"/>
</dbReference>
<dbReference type="neXtProt" id="NX_Q92186"/>
<dbReference type="OpenTargets" id="ENSG00000140557"/>
<dbReference type="PharmGKB" id="PA35771"/>
<dbReference type="VEuPathDB" id="HostDB:ENSG00000140557"/>
<dbReference type="eggNOG" id="KOG2692">
    <property type="taxonomic scope" value="Eukaryota"/>
</dbReference>
<dbReference type="GeneTree" id="ENSGT01030000234535"/>
<dbReference type="InParanoid" id="Q92186"/>
<dbReference type="OMA" id="ATRFCNT"/>
<dbReference type="OrthoDB" id="10264956at2759"/>
<dbReference type="PAN-GO" id="Q92186">
    <property type="GO annotations" value="4 GO annotations based on evolutionary models"/>
</dbReference>
<dbReference type="PhylomeDB" id="Q92186"/>
<dbReference type="TreeFam" id="TF352820"/>
<dbReference type="BRENDA" id="2.4.99.8">
    <property type="organism ID" value="2681"/>
</dbReference>
<dbReference type="PathwayCommons" id="Q92186"/>
<dbReference type="Reactome" id="R-HSA-4085001">
    <property type="pathway name" value="Sialic acid metabolism"/>
</dbReference>
<dbReference type="Reactome" id="R-HSA-419037">
    <property type="pathway name" value="NCAM1 interactions"/>
</dbReference>
<dbReference type="Reactome" id="R-HSA-975577">
    <property type="pathway name" value="N-Glycan antennae elongation"/>
</dbReference>
<dbReference type="SignaLink" id="Q92186"/>
<dbReference type="SIGNOR" id="Q92186"/>
<dbReference type="UniPathway" id="UPA00378"/>
<dbReference type="BioGRID-ORCS" id="8128">
    <property type="hits" value="7 hits in 1131 CRISPR screens"/>
</dbReference>
<dbReference type="ChiTaRS" id="ST8SIA2">
    <property type="organism name" value="human"/>
</dbReference>
<dbReference type="GeneWiki" id="ST8SIA2"/>
<dbReference type="GenomeRNAi" id="8128"/>
<dbReference type="Pharos" id="Q92186">
    <property type="development level" value="Tbio"/>
</dbReference>
<dbReference type="PRO" id="PR:Q92186"/>
<dbReference type="Proteomes" id="UP000005640">
    <property type="component" value="Chromosome 15"/>
</dbReference>
<dbReference type="RNAct" id="Q92186">
    <property type="molecule type" value="protein"/>
</dbReference>
<dbReference type="Bgee" id="ENSG00000140557">
    <property type="expression patterns" value="Expressed in cortical plate and 71 other cell types or tissues"/>
</dbReference>
<dbReference type="ExpressionAtlas" id="Q92186">
    <property type="expression patterns" value="baseline and differential"/>
</dbReference>
<dbReference type="GO" id="GO:0005829">
    <property type="term" value="C:cytosol"/>
    <property type="evidence" value="ECO:0000314"/>
    <property type="project" value="HPA"/>
</dbReference>
<dbReference type="GO" id="GO:0005769">
    <property type="term" value="C:early endosome"/>
    <property type="evidence" value="ECO:0007669"/>
    <property type="project" value="Ensembl"/>
</dbReference>
<dbReference type="GO" id="GO:0005576">
    <property type="term" value="C:extracellular region"/>
    <property type="evidence" value="ECO:0000314"/>
    <property type="project" value="UniProtKB"/>
</dbReference>
<dbReference type="GO" id="GO:0005794">
    <property type="term" value="C:Golgi apparatus"/>
    <property type="evidence" value="ECO:0000314"/>
    <property type="project" value="UniProtKB"/>
</dbReference>
<dbReference type="GO" id="GO:0000139">
    <property type="term" value="C:Golgi membrane"/>
    <property type="evidence" value="ECO:0000304"/>
    <property type="project" value="Reactome"/>
</dbReference>
<dbReference type="GO" id="GO:0005654">
    <property type="term" value="C:nucleoplasm"/>
    <property type="evidence" value="ECO:0000314"/>
    <property type="project" value="HPA"/>
</dbReference>
<dbReference type="GO" id="GO:0048471">
    <property type="term" value="C:perinuclear region of cytoplasm"/>
    <property type="evidence" value="ECO:0007669"/>
    <property type="project" value="Ensembl"/>
</dbReference>
<dbReference type="GO" id="GO:0005886">
    <property type="term" value="C:plasma membrane"/>
    <property type="evidence" value="ECO:0007669"/>
    <property type="project" value="UniProtKB-SubCell"/>
</dbReference>
<dbReference type="GO" id="GO:0055037">
    <property type="term" value="C:recycling endosome"/>
    <property type="evidence" value="ECO:0007669"/>
    <property type="project" value="Ensembl"/>
</dbReference>
<dbReference type="GO" id="GO:0003828">
    <property type="term" value="F:alpha-N-acetylneuraminate alpha-2,8-sialyltransferase activity"/>
    <property type="evidence" value="ECO:0000314"/>
    <property type="project" value="UniProtKB"/>
</dbReference>
<dbReference type="GO" id="GO:0000166">
    <property type="term" value="F:nucleotide binding"/>
    <property type="evidence" value="ECO:0007669"/>
    <property type="project" value="UniProtKB-KW"/>
</dbReference>
<dbReference type="GO" id="GO:0033691">
    <property type="term" value="F:sialic acid binding"/>
    <property type="evidence" value="ECO:0000305"/>
    <property type="project" value="BHF-UCL"/>
</dbReference>
<dbReference type="GO" id="GO:0005975">
    <property type="term" value="P:carbohydrate metabolic process"/>
    <property type="evidence" value="ECO:0000304"/>
    <property type="project" value="ProtInc"/>
</dbReference>
<dbReference type="GO" id="GO:0001574">
    <property type="term" value="P:ganglioside biosynthetic process"/>
    <property type="evidence" value="ECO:0000314"/>
    <property type="project" value="BHF-UCL"/>
</dbReference>
<dbReference type="GO" id="GO:0006491">
    <property type="term" value="P:N-glycan processing"/>
    <property type="evidence" value="ECO:0000314"/>
    <property type="project" value="BHF-UCL"/>
</dbReference>
<dbReference type="GO" id="GO:0007399">
    <property type="term" value="P:nervous system development"/>
    <property type="evidence" value="ECO:0000304"/>
    <property type="project" value="ProtInc"/>
</dbReference>
<dbReference type="GO" id="GO:1990138">
    <property type="term" value="P:neuron projection extension"/>
    <property type="evidence" value="ECO:0007669"/>
    <property type="project" value="Ensembl"/>
</dbReference>
<dbReference type="GO" id="GO:0009311">
    <property type="term" value="P:oligosaccharide metabolic process"/>
    <property type="evidence" value="ECO:0000314"/>
    <property type="project" value="BHF-UCL"/>
</dbReference>
<dbReference type="GO" id="GO:0043525">
    <property type="term" value="P:positive regulation of neuron apoptotic process"/>
    <property type="evidence" value="ECO:0007669"/>
    <property type="project" value="Ensembl"/>
</dbReference>
<dbReference type="GO" id="GO:0051965">
    <property type="term" value="P:positive regulation of synapse assembly"/>
    <property type="evidence" value="ECO:0007669"/>
    <property type="project" value="Ensembl"/>
</dbReference>
<dbReference type="GO" id="GO:0006486">
    <property type="term" value="P:protein glycosylation"/>
    <property type="evidence" value="ECO:0000314"/>
    <property type="project" value="BHF-UCL"/>
</dbReference>
<dbReference type="GO" id="GO:0036211">
    <property type="term" value="P:protein modification process"/>
    <property type="evidence" value="ECO:0000304"/>
    <property type="project" value="ProtInc"/>
</dbReference>
<dbReference type="GO" id="GO:0042220">
    <property type="term" value="P:response to cocaine"/>
    <property type="evidence" value="ECO:0007669"/>
    <property type="project" value="Ensembl"/>
</dbReference>
<dbReference type="GO" id="GO:0097503">
    <property type="term" value="P:sialylation"/>
    <property type="evidence" value="ECO:0000314"/>
    <property type="project" value="UniProtKB"/>
</dbReference>
<dbReference type="CDD" id="cd23987">
    <property type="entry name" value="GT29_ST8SIA2"/>
    <property type="match status" value="1"/>
</dbReference>
<dbReference type="FunFam" id="3.90.1480.20:FF:000001">
    <property type="entry name" value="ST8 alpha-N-acetyl-neuraminide alpha-2,8-sialyltransferase 2"/>
    <property type="match status" value="1"/>
</dbReference>
<dbReference type="Gene3D" id="3.90.1480.20">
    <property type="entry name" value="Glycosyl transferase family 29"/>
    <property type="match status" value="1"/>
</dbReference>
<dbReference type="InterPro" id="IPR001675">
    <property type="entry name" value="Glyco_trans_29"/>
</dbReference>
<dbReference type="InterPro" id="IPR050943">
    <property type="entry name" value="Glycosyltr_29_Sialyltrsf"/>
</dbReference>
<dbReference type="InterPro" id="IPR038578">
    <property type="entry name" value="GT29-like_sf"/>
</dbReference>
<dbReference type="InterPro" id="IPR012163">
    <property type="entry name" value="Sialyl_trans"/>
</dbReference>
<dbReference type="PANTHER" id="PTHR11987">
    <property type="entry name" value="ALPHA-2,8-SIALYLTRANSFERASE"/>
    <property type="match status" value="1"/>
</dbReference>
<dbReference type="PANTHER" id="PTHR11987:SF30">
    <property type="entry name" value="ALPHA-2,8-SIALYLTRANSFERASE 8B"/>
    <property type="match status" value="1"/>
</dbReference>
<dbReference type="Pfam" id="PF00777">
    <property type="entry name" value="Glyco_transf_29"/>
    <property type="match status" value="1"/>
</dbReference>
<dbReference type="PIRSF" id="PIRSF005557">
    <property type="entry name" value="Sialyl_trans"/>
    <property type="match status" value="1"/>
</dbReference>
<name>SIA8B_HUMAN</name>
<feature type="chain" id="PRO_0000149285" description="Alpha-2,8-sialyltransferase 8B">
    <location>
        <begin position="1"/>
        <end position="375"/>
    </location>
</feature>
<feature type="topological domain" description="Cytoplasmic" evidence="3">
    <location>
        <begin position="1"/>
        <end position="6"/>
    </location>
</feature>
<feature type="transmembrane region" description="Helical; Signal-anchor for type II membrane protein" evidence="3">
    <location>
        <begin position="7"/>
        <end position="23"/>
    </location>
</feature>
<feature type="topological domain" description="Lumenal" evidence="3">
    <location>
        <begin position="24"/>
        <end position="375"/>
    </location>
</feature>
<feature type="active site" description="Proton donor/acceptor" evidence="2">
    <location>
        <position position="346"/>
    </location>
</feature>
<feature type="binding site" evidence="2">
    <location>
        <position position="162"/>
    </location>
    <ligand>
        <name>CMP-N-acetyl-beta-neuraminate</name>
        <dbReference type="ChEBI" id="CHEBI:57812"/>
    </ligand>
</feature>
<feature type="binding site" evidence="2">
    <location>
        <position position="185"/>
    </location>
    <ligand>
        <name>CMP-N-acetyl-beta-neuraminate</name>
        <dbReference type="ChEBI" id="CHEBI:57812"/>
    </ligand>
</feature>
<feature type="binding site" evidence="2">
    <location>
        <position position="294"/>
    </location>
    <ligand>
        <name>CMP-N-acetyl-beta-neuraminate</name>
        <dbReference type="ChEBI" id="CHEBI:57812"/>
    </ligand>
</feature>
<feature type="binding site" evidence="2">
    <location>
        <position position="295"/>
    </location>
    <ligand>
        <name>CMP-N-acetyl-beta-neuraminate</name>
        <dbReference type="ChEBI" id="CHEBI:57812"/>
    </ligand>
</feature>
<feature type="binding site" evidence="2">
    <location>
        <position position="296"/>
    </location>
    <ligand>
        <name>CMP-N-acetyl-beta-neuraminate</name>
        <dbReference type="ChEBI" id="CHEBI:57812"/>
    </ligand>
</feature>
<feature type="binding site" evidence="2">
    <location>
        <position position="316"/>
    </location>
    <ligand>
        <name>CMP-N-acetyl-beta-neuraminate</name>
        <dbReference type="ChEBI" id="CHEBI:57812"/>
    </ligand>
</feature>
<feature type="binding site" evidence="2">
    <location>
        <position position="329"/>
    </location>
    <ligand>
        <name>CMP-N-acetyl-beta-neuraminate</name>
        <dbReference type="ChEBI" id="CHEBI:57812"/>
    </ligand>
</feature>
<feature type="binding site" evidence="2">
    <location>
        <position position="330"/>
    </location>
    <ligand>
        <name>CMP-N-acetyl-beta-neuraminate</name>
        <dbReference type="ChEBI" id="CHEBI:57812"/>
    </ligand>
</feature>
<feature type="glycosylation site" description="N-linked (GlcNAc...) asparagine" evidence="3 13">
    <location>
        <position position="60"/>
    </location>
</feature>
<feature type="glycosylation site" description="N-linked (GlcNAc...) asparagine" evidence="3 13">
    <location>
        <position position="72"/>
    </location>
</feature>
<feature type="glycosylation site" description="N-linked (GlcNAc...) asparagine" evidence="3 13">
    <location>
        <position position="89"/>
    </location>
</feature>
<feature type="glycosylation site" description="N-linked (GlcNAc...) asparagine" evidence="3 13">
    <location>
        <position position="134"/>
    </location>
</feature>
<feature type="glycosylation site" description="N-linked (GlcNAc...) asparagine" evidence="3 13">
    <location>
        <position position="219"/>
    </location>
</feature>
<feature type="glycosylation site" description="N-linked (GlcNAc...) asparagine" evidence="3 13">
    <location>
        <position position="234"/>
    </location>
</feature>
<feature type="disulfide bond" evidence="2">
    <location>
        <begin position="157"/>
        <end position="307"/>
    </location>
</feature>
<feature type="disulfide bond" evidence="2">
    <location>
        <begin position="171"/>
        <end position="371"/>
    </location>
</feature>
<feature type="mutagenesis site" description="Does not affect autopolysialylation." evidence="6">
    <original>N</original>
    <variation>S</variation>
    <location>
        <position position="60"/>
    </location>
</feature>
<feature type="mutagenesis site" description="Does not affect autopolysialylation." evidence="6">
    <original>N</original>
    <variation>S</variation>
    <location>
        <position position="72"/>
    </location>
</feature>
<feature type="mutagenesis site" description="Loss of autopolysialylation; when associated with Q-219 and Q-234. Loss of polysialylation activity; when associated with Q-89 and Q-219." evidence="6">
    <original>N</original>
    <variation>Q</variation>
    <location>
        <position position="89"/>
    </location>
</feature>
<feature type="mutagenesis site" description="Decreases autopolysialylation. Does not affect localization at Golgi apparatus. Increases cell surface autopolysialylated protein. Loss of autopolysialylation; when associated with S-219 and S-234. Does not affect NCAM1 polysialylation activity." evidence="6">
    <original>N</original>
    <variation>S</variation>
    <location>
        <position position="89"/>
    </location>
</feature>
<feature type="mutagenesis site" description="Does not affect autopolysialylation." evidence="6">
    <original>N</original>
    <variation>S</variation>
    <location>
        <position position="134"/>
    </location>
</feature>
<feature type="mutagenesis site" description="Loss of autopolysialylation; when associted with Q-89 and S-234. Loss of polysialylation activity; when associated with Q-89 and Q-219." evidence="6">
    <original>N</original>
    <variation>Q</variation>
    <location>
        <position position="219"/>
    </location>
</feature>
<feature type="mutagenesis site" description="Decreases autopolysialylation. Does not affect localization at Golgi apparatus. Increases cell surface autopolysialylated protein at cell surface. Loss of autopolysialylation; when associated with S-89 and S-234. Does not affect NCAM1 polysialylation activity." evidence="6">
    <original>N</original>
    <variation>S</variation>
    <location>
        <position position="219"/>
    </location>
</feature>
<feature type="mutagenesis site" description="Loss of autopolysialylation; when associted with Q-89 and Q-219. Loss of polysialylation activity; when associated with Q-89 and Q-219." evidence="6">
    <original>N</original>
    <variation>Q</variation>
    <location>
        <position position="234"/>
    </location>
</feature>
<feature type="mutagenesis site" description="Decreases autopolysialylation. Does not affect localization at Golgi apparatus. Loss of autopolysialylation; when associated with S-89 and S-219. Does not affect NCAM1 polysialylation activity." evidence="6">
    <original>N</original>
    <variation>S</variation>
    <location>
        <position position="234"/>
    </location>
</feature>
<feature type="sequence conflict" description="In Ref. 2; AAA36613." evidence="12" ref="2">
    <original>G</original>
    <variation>Q</variation>
    <location>
        <position position="155"/>
    </location>
</feature>
<feature type="sequence conflict" description="In Ref. 2; AAA36613." evidence="12" ref="2">
    <original>C</original>
    <variation>Y</variation>
    <location>
        <position position="171"/>
    </location>
</feature>
<organism>
    <name type="scientific">Homo sapiens</name>
    <name type="common">Human</name>
    <dbReference type="NCBI Taxonomy" id="9606"/>
    <lineage>
        <taxon>Eukaryota</taxon>
        <taxon>Metazoa</taxon>
        <taxon>Chordata</taxon>
        <taxon>Craniata</taxon>
        <taxon>Vertebrata</taxon>
        <taxon>Euteleostomi</taxon>
        <taxon>Mammalia</taxon>
        <taxon>Eutheria</taxon>
        <taxon>Euarchontoglires</taxon>
        <taxon>Primates</taxon>
        <taxon>Haplorrhini</taxon>
        <taxon>Catarrhini</taxon>
        <taxon>Hominidae</taxon>
        <taxon>Homo</taxon>
    </lineage>
</organism>